<sequence>MAIKSTEKHTPMMQQYLRLKSENPDILLFYRMGDFYELFYDDAKRASQLLEISLTKRGSSAGEPIPMAGIPYHAVEGYLAKLVQQGESVAICEQVGDPATSKGPVERKVVRIVTPGTVTDEALLPERFDNLIAAIYHHKGQFGYATLDITSGRFKVSEPNTEEAMLAELQRTAPTELLFSEDFEPVHLLEKRNGNRRRPVWEFELDTAKQQLNNQFGTRDLVGFGVEKAEFGLCAAGCLIQYVKDTQRTTLPHIRSIIMDHQDDSVILDAATRRNLEITQNLAGGFNHTLAEILDHTSTAMGSRLLKRWLHQPVRTHDVLNQRLDAIGELKESGLFADMAPQLKNIGDVERILARLALRSARPRDLARLRNALQQLPELSQTTQEFQQDHLLTLAASAQPIDSICELLERAIKENPPVVIRDGGVLADGYNEELDQWRDLANGATQYLEKLEQEERERHDIDTLKVGYNNVHGFYIQISKGQSHKAPAHYVRRQTLKNAERYIIPELKEHEDKVLNSKSKALAIEKRLWEELFDQLLPHLEQLQSMANAISELDVLSNLAERADTLNYCRPVLTKETGINIEGGRHPVVEQVMSDPFIANPIKLNPDRKMLIITGPNMGGKSTYMRQTALIALMAHVGCYVPADSAEIGTLDRIFTRIGASDDLASGRSTFMVEMTETANILHNATKHSLVLMDEIGRGTSTYDGLSLAWASAEWLATKINAMTLFATHYFELTELPNLFTGLANVHLDAVEHGDEIAFMHAVQEGAANKSYGLAVASLAGVPKSVIKKAKQKLQHLESGQVPVPATSTTVKEEHQLSLIPEISEVEEALAHVNPDDLTPRQALEELYRLKALL</sequence>
<reference key="1">
    <citation type="journal article" date="2005" name="Proc. Natl. Acad. Sci. U.S.A.">
        <title>Complete genome sequence of Vibrio fischeri: a symbiotic bacterium with pathogenic congeners.</title>
        <authorList>
            <person name="Ruby E.G."/>
            <person name="Urbanowski M."/>
            <person name="Campbell J."/>
            <person name="Dunn A."/>
            <person name="Faini M."/>
            <person name="Gunsalus R."/>
            <person name="Lostroh P."/>
            <person name="Lupp C."/>
            <person name="McCann J."/>
            <person name="Millikan D."/>
            <person name="Schaefer A."/>
            <person name="Stabb E."/>
            <person name="Stevens A."/>
            <person name="Visick K."/>
            <person name="Whistler C."/>
            <person name="Greenberg E.P."/>
        </authorList>
    </citation>
    <scope>NUCLEOTIDE SEQUENCE [LARGE SCALE GENOMIC DNA]</scope>
    <source>
        <strain>ATCC 700601 / ES114</strain>
    </source>
</reference>
<name>MUTS_ALIF1</name>
<evidence type="ECO:0000255" key="1">
    <source>
        <dbReference type="HAMAP-Rule" id="MF_00096"/>
    </source>
</evidence>
<protein>
    <recommendedName>
        <fullName evidence="1">DNA mismatch repair protein MutS</fullName>
    </recommendedName>
</protein>
<organism>
    <name type="scientific">Aliivibrio fischeri (strain ATCC 700601 / ES114)</name>
    <name type="common">Vibrio fischeri</name>
    <dbReference type="NCBI Taxonomy" id="312309"/>
    <lineage>
        <taxon>Bacteria</taxon>
        <taxon>Pseudomonadati</taxon>
        <taxon>Pseudomonadota</taxon>
        <taxon>Gammaproteobacteria</taxon>
        <taxon>Vibrionales</taxon>
        <taxon>Vibrionaceae</taxon>
        <taxon>Aliivibrio</taxon>
    </lineage>
</organism>
<accession>Q5E7G7</accession>
<dbReference type="EMBL" id="CP000020">
    <property type="protein sequence ID" value="AAW85029.2"/>
    <property type="molecule type" value="Genomic_DNA"/>
</dbReference>
<dbReference type="RefSeq" id="WP_011261298.1">
    <property type="nucleotide sequence ID" value="NC_006840.2"/>
</dbReference>
<dbReference type="RefSeq" id="YP_203917.2">
    <property type="nucleotide sequence ID" value="NC_006840.2"/>
</dbReference>
<dbReference type="SMR" id="Q5E7G7"/>
<dbReference type="STRING" id="312309.VF_0534"/>
<dbReference type="EnsemblBacteria" id="AAW85029">
    <property type="protein sequence ID" value="AAW85029"/>
    <property type="gene ID" value="VF_0534"/>
</dbReference>
<dbReference type="GeneID" id="54163171"/>
<dbReference type="KEGG" id="vfi:VF_0534"/>
<dbReference type="PATRIC" id="fig|312309.11.peg.525"/>
<dbReference type="eggNOG" id="COG0249">
    <property type="taxonomic scope" value="Bacteria"/>
</dbReference>
<dbReference type="HOGENOM" id="CLU_002472_4_0_6"/>
<dbReference type="OrthoDB" id="9802448at2"/>
<dbReference type="Proteomes" id="UP000000537">
    <property type="component" value="Chromosome I"/>
</dbReference>
<dbReference type="GO" id="GO:0005829">
    <property type="term" value="C:cytosol"/>
    <property type="evidence" value="ECO:0007669"/>
    <property type="project" value="TreeGrafter"/>
</dbReference>
<dbReference type="GO" id="GO:0005524">
    <property type="term" value="F:ATP binding"/>
    <property type="evidence" value="ECO:0007669"/>
    <property type="project" value="UniProtKB-UniRule"/>
</dbReference>
<dbReference type="GO" id="GO:0140664">
    <property type="term" value="F:ATP-dependent DNA damage sensor activity"/>
    <property type="evidence" value="ECO:0007669"/>
    <property type="project" value="InterPro"/>
</dbReference>
<dbReference type="GO" id="GO:0003684">
    <property type="term" value="F:damaged DNA binding"/>
    <property type="evidence" value="ECO:0007669"/>
    <property type="project" value="UniProtKB-UniRule"/>
</dbReference>
<dbReference type="GO" id="GO:0030983">
    <property type="term" value="F:mismatched DNA binding"/>
    <property type="evidence" value="ECO:0007669"/>
    <property type="project" value="InterPro"/>
</dbReference>
<dbReference type="GO" id="GO:0006298">
    <property type="term" value="P:mismatch repair"/>
    <property type="evidence" value="ECO:0007669"/>
    <property type="project" value="UniProtKB-UniRule"/>
</dbReference>
<dbReference type="CDD" id="cd03284">
    <property type="entry name" value="ABC_MutS1"/>
    <property type="match status" value="1"/>
</dbReference>
<dbReference type="FunFam" id="1.10.1420.10:FF:000002">
    <property type="entry name" value="DNA mismatch repair protein MutS"/>
    <property type="match status" value="1"/>
</dbReference>
<dbReference type="FunFam" id="3.30.420.110:FF:000001">
    <property type="entry name" value="DNA mismatch repair protein MutS"/>
    <property type="match status" value="1"/>
</dbReference>
<dbReference type="FunFam" id="3.40.1170.10:FF:000001">
    <property type="entry name" value="DNA mismatch repair protein MutS"/>
    <property type="match status" value="1"/>
</dbReference>
<dbReference type="FunFam" id="3.40.50.300:FF:000283">
    <property type="entry name" value="DNA mismatch repair protein MutS"/>
    <property type="match status" value="1"/>
</dbReference>
<dbReference type="Gene3D" id="1.10.1420.10">
    <property type="match status" value="2"/>
</dbReference>
<dbReference type="Gene3D" id="6.10.140.430">
    <property type="match status" value="1"/>
</dbReference>
<dbReference type="Gene3D" id="3.40.1170.10">
    <property type="entry name" value="DNA repair protein MutS, domain I"/>
    <property type="match status" value="1"/>
</dbReference>
<dbReference type="Gene3D" id="3.30.420.110">
    <property type="entry name" value="MutS, connector domain"/>
    <property type="match status" value="1"/>
</dbReference>
<dbReference type="Gene3D" id="3.40.50.300">
    <property type="entry name" value="P-loop containing nucleotide triphosphate hydrolases"/>
    <property type="match status" value="1"/>
</dbReference>
<dbReference type="HAMAP" id="MF_00096">
    <property type="entry name" value="MutS"/>
    <property type="match status" value="1"/>
</dbReference>
<dbReference type="InterPro" id="IPR005748">
    <property type="entry name" value="DNA_mismatch_repair_MutS"/>
</dbReference>
<dbReference type="InterPro" id="IPR007695">
    <property type="entry name" value="DNA_mismatch_repair_MutS-lik_N"/>
</dbReference>
<dbReference type="InterPro" id="IPR017261">
    <property type="entry name" value="DNA_mismatch_repair_MutS/MSH"/>
</dbReference>
<dbReference type="InterPro" id="IPR000432">
    <property type="entry name" value="DNA_mismatch_repair_MutS_C"/>
</dbReference>
<dbReference type="InterPro" id="IPR007861">
    <property type="entry name" value="DNA_mismatch_repair_MutS_clamp"/>
</dbReference>
<dbReference type="InterPro" id="IPR007696">
    <property type="entry name" value="DNA_mismatch_repair_MutS_core"/>
</dbReference>
<dbReference type="InterPro" id="IPR016151">
    <property type="entry name" value="DNA_mismatch_repair_MutS_N"/>
</dbReference>
<dbReference type="InterPro" id="IPR036187">
    <property type="entry name" value="DNA_mismatch_repair_MutS_sf"/>
</dbReference>
<dbReference type="InterPro" id="IPR007860">
    <property type="entry name" value="DNA_mmatch_repair_MutS_con_dom"/>
</dbReference>
<dbReference type="InterPro" id="IPR045076">
    <property type="entry name" value="MutS"/>
</dbReference>
<dbReference type="InterPro" id="IPR036678">
    <property type="entry name" value="MutS_con_dom_sf"/>
</dbReference>
<dbReference type="InterPro" id="IPR027417">
    <property type="entry name" value="P-loop_NTPase"/>
</dbReference>
<dbReference type="NCBIfam" id="TIGR01070">
    <property type="entry name" value="mutS1"/>
    <property type="match status" value="1"/>
</dbReference>
<dbReference type="NCBIfam" id="NF003810">
    <property type="entry name" value="PRK05399.1"/>
    <property type="match status" value="1"/>
</dbReference>
<dbReference type="PANTHER" id="PTHR11361:SF34">
    <property type="entry name" value="DNA MISMATCH REPAIR PROTEIN MSH1, MITOCHONDRIAL"/>
    <property type="match status" value="1"/>
</dbReference>
<dbReference type="PANTHER" id="PTHR11361">
    <property type="entry name" value="DNA MISMATCH REPAIR PROTEIN MUTS FAMILY MEMBER"/>
    <property type="match status" value="1"/>
</dbReference>
<dbReference type="Pfam" id="PF01624">
    <property type="entry name" value="MutS_I"/>
    <property type="match status" value="1"/>
</dbReference>
<dbReference type="Pfam" id="PF05188">
    <property type="entry name" value="MutS_II"/>
    <property type="match status" value="1"/>
</dbReference>
<dbReference type="Pfam" id="PF05192">
    <property type="entry name" value="MutS_III"/>
    <property type="match status" value="1"/>
</dbReference>
<dbReference type="Pfam" id="PF05190">
    <property type="entry name" value="MutS_IV"/>
    <property type="match status" value="1"/>
</dbReference>
<dbReference type="Pfam" id="PF00488">
    <property type="entry name" value="MutS_V"/>
    <property type="match status" value="1"/>
</dbReference>
<dbReference type="PIRSF" id="PIRSF037677">
    <property type="entry name" value="DNA_mis_repair_Msh6"/>
    <property type="match status" value="1"/>
</dbReference>
<dbReference type="SMART" id="SM00534">
    <property type="entry name" value="MUTSac"/>
    <property type="match status" value="1"/>
</dbReference>
<dbReference type="SMART" id="SM00533">
    <property type="entry name" value="MUTSd"/>
    <property type="match status" value="1"/>
</dbReference>
<dbReference type="SUPFAM" id="SSF55271">
    <property type="entry name" value="DNA repair protein MutS, domain I"/>
    <property type="match status" value="1"/>
</dbReference>
<dbReference type="SUPFAM" id="SSF53150">
    <property type="entry name" value="DNA repair protein MutS, domain II"/>
    <property type="match status" value="1"/>
</dbReference>
<dbReference type="SUPFAM" id="SSF48334">
    <property type="entry name" value="DNA repair protein MutS, domain III"/>
    <property type="match status" value="1"/>
</dbReference>
<dbReference type="SUPFAM" id="SSF52540">
    <property type="entry name" value="P-loop containing nucleoside triphosphate hydrolases"/>
    <property type="match status" value="1"/>
</dbReference>
<dbReference type="PROSITE" id="PS00486">
    <property type="entry name" value="DNA_MISMATCH_REPAIR_2"/>
    <property type="match status" value="1"/>
</dbReference>
<feature type="chain" id="PRO_0000224416" description="DNA mismatch repair protein MutS">
    <location>
        <begin position="1"/>
        <end position="854"/>
    </location>
</feature>
<feature type="binding site" evidence="1">
    <location>
        <begin position="615"/>
        <end position="622"/>
    </location>
    <ligand>
        <name>ATP</name>
        <dbReference type="ChEBI" id="CHEBI:30616"/>
    </ligand>
</feature>
<gene>
    <name evidence="1" type="primary">mutS</name>
    <name type="ordered locus">VF_0534</name>
</gene>
<keyword id="KW-0067">ATP-binding</keyword>
<keyword id="KW-0227">DNA damage</keyword>
<keyword id="KW-0234">DNA repair</keyword>
<keyword id="KW-0238">DNA-binding</keyword>
<keyword id="KW-0547">Nucleotide-binding</keyword>
<keyword id="KW-1185">Reference proteome</keyword>
<proteinExistence type="inferred from homology"/>
<comment type="function">
    <text evidence="1">This protein is involved in the repair of mismatches in DNA. It is possible that it carries out the mismatch recognition step. This protein has a weak ATPase activity.</text>
</comment>
<comment type="similarity">
    <text evidence="1">Belongs to the DNA mismatch repair MutS family.</text>
</comment>